<reference key="1">
    <citation type="journal article" date="2005" name="Mol. Biol. Evol.">
        <title>Analysis of Acorus calamus chloroplast genome and its phylogenetic implications.</title>
        <authorList>
            <person name="Goremykin V.V."/>
            <person name="Holland B."/>
            <person name="Hirsch-Ernst K.I."/>
            <person name="Hellwig F.H."/>
        </authorList>
    </citation>
    <scope>NUCLEOTIDE SEQUENCE [LARGE SCALE GENOMIC DNA]</scope>
</reference>
<proteinExistence type="inferred from homology"/>
<protein>
    <recommendedName>
        <fullName evidence="1">Potassium/proton antiporter CemA</fullName>
    </recommendedName>
    <alternativeName>
        <fullName evidence="1">Chloroplast envelope membrane protein A</fullName>
        <shortName evidence="1">CemA</shortName>
    </alternativeName>
</protein>
<organism>
    <name type="scientific">Acorus calamus</name>
    <name type="common">Sweet flag</name>
    <dbReference type="NCBI Taxonomy" id="4465"/>
    <lineage>
        <taxon>Eukaryota</taxon>
        <taxon>Viridiplantae</taxon>
        <taxon>Streptophyta</taxon>
        <taxon>Embryophyta</taxon>
        <taxon>Tracheophyta</taxon>
        <taxon>Spermatophyta</taxon>
        <taxon>Magnoliopsida</taxon>
        <taxon>Liliopsida</taxon>
        <taxon>Acoraceae</taxon>
        <taxon>Acorus</taxon>
    </lineage>
</organism>
<accession>Q3V523</accession>
<name>CEMA_ACOCL</name>
<feature type="chain" id="PRO_0000293507" description="Potassium/proton antiporter CemA">
    <location>
        <begin position="1"/>
        <end position="229"/>
    </location>
</feature>
<feature type="transmembrane region" description="Helical" evidence="1">
    <location>
        <begin position="7"/>
        <end position="27"/>
    </location>
</feature>
<feature type="transmembrane region" description="Helical" evidence="1">
    <location>
        <begin position="114"/>
        <end position="134"/>
    </location>
</feature>
<feature type="transmembrane region" description="Helical" evidence="1">
    <location>
        <begin position="154"/>
        <end position="174"/>
    </location>
</feature>
<feature type="transmembrane region" description="Helical" evidence="1">
    <location>
        <begin position="189"/>
        <end position="209"/>
    </location>
</feature>
<geneLocation type="chloroplast"/>
<keyword id="KW-0050">Antiport</keyword>
<keyword id="KW-0150">Chloroplast</keyword>
<keyword id="KW-0375">Hydrogen ion transport</keyword>
<keyword id="KW-0406">Ion transport</keyword>
<keyword id="KW-0472">Membrane</keyword>
<keyword id="KW-0934">Plastid</keyword>
<keyword id="KW-1001">Plastid inner membrane</keyword>
<keyword id="KW-0630">Potassium</keyword>
<keyword id="KW-0633">Potassium transport</keyword>
<keyword id="KW-0812">Transmembrane</keyword>
<keyword id="KW-1133">Transmembrane helix</keyword>
<keyword id="KW-0813">Transport</keyword>
<comment type="function">
    <text evidence="1">Contributes to K(+)/H(+) antiport activity by supporting proton efflux to control proton extrusion and homeostasis in chloroplasts in a light-dependent manner to modulate photosynthesis. Prevents excessive induction of non-photochemical quenching (NPQ) under continuous-light conditions. Indirectly promotes efficient inorganic carbon uptake into chloroplasts.</text>
</comment>
<comment type="catalytic activity">
    <reaction evidence="1">
        <text>K(+)(in) + H(+)(out) = K(+)(out) + H(+)(in)</text>
        <dbReference type="Rhea" id="RHEA:29467"/>
        <dbReference type="ChEBI" id="CHEBI:15378"/>
        <dbReference type="ChEBI" id="CHEBI:29103"/>
    </reaction>
</comment>
<comment type="subcellular location">
    <subcellularLocation>
        <location evidence="1">Plastid</location>
        <location evidence="1">Chloroplast inner membrane</location>
        <topology evidence="1">Multi-pass membrane protein</topology>
    </subcellularLocation>
</comment>
<comment type="similarity">
    <text evidence="1 2">Belongs to the CemA family.</text>
</comment>
<gene>
    <name evidence="1" type="primary">cemA</name>
</gene>
<evidence type="ECO:0000255" key="1">
    <source>
        <dbReference type="HAMAP-Rule" id="MF_01308"/>
    </source>
</evidence>
<evidence type="ECO:0000305" key="2"/>
<dbReference type="EMBL" id="AJ879453">
    <property type="protein sequence ID" value="CAI53805.1"/>
    <property type="molecule type" value="Genomic_DNA"/>
</dbReference>
<dbReference type="RefSeq" id="YP_319776.1">
    <property type="nucleotide sequence ID" value="NC_007407.1"/>
</dbReference>
<dbReference type="SMR" id="Q3V523"/>
<dbReference type="GeneID" id="3677511"/>
<dbReference type="GO" id="GO:0009706">
    <property type="term" value="C:chloroplast inner membrane"/>
    <property type="evidence" value="ECO:0007669"/>
    <property type="project" value="UniProtKB-SubCell"/>
</dbReference>
<dbReference type="GO" id="GO:0015297">
    <property type="term" value="F:antiporter activity"/>
    <property type="evidence" value="ECO:0007669"/>
    <property type="project" value="UniProtKB-KW"/>
</dbReference>
<dbReference type="GO" id="GO:0015078">
    <property type="term" value="F:proton transmembrane transporter activity"/>
    <property type="evidence" value="ECO:0007669"/>
    <property type="project" value="UniProtKB-UniRule"/>
</dbReference>
<dbReference type="GO" id="GO:0006813">
    <property type="term" value="P:potassium ion transport"/>
    <property type="evidence" value="ECO:0007669"/>
    <property type="project" value="UniProtKB-UniRule"/>
</dbReference>
<dbReference type="HAMAP" id="MF_01308">
    <property type="entry name" value="CemA_PxcA"/>
    <property type="match status" value="1"/>
</dbReference>
<dbReference type="InterPro" id="IPR004282">
    <property type="entry name" value="CemA"/>
</dbReference>
<dbReference type="PANTHER" id="PTHR33650:SF2">
    <property type="entry name" value="CHLOROPLAST ENVELOPE MEMBRANE PROTEIN"/>
    <property type="match status" value="1"/>
</dbReference>
<dbReference type="PANTHER" id="PTHR33650">
    <property type="entry name" value="CHLOROPLAST ENVELOPE MEMBRANE PROTEIN-RELATED"/>
    <property type="match status" value="1"/>
</dbReference>
<dbReference type="Pfam" id="PF03040">
    <property type="entry name" value="CemA"/>
    <property type="match status" value="1"/>
</dbReference>
<sequence>MPKKKGFTPLPYLASIVFLPWWVSLSFNKSLEPWVTNWWNTRQSETFLNDIQERNVLERFIELEELFLLDEMLKENPETRMKNLRIGIHNETIQLVKTDNEYHLHTILHFSTNIICFAILSVYSILGNEELVILNSWVQEFLYNLSDTIKAFSILLVTDLWIGFHSPHGWELMIGSVYNDFGLAHNEQIISGLVSTFPVILDTIVKYWIFHYLNRVSPSLVVIYHSMND</sequence>